<accession>P67431</accession>
<accession>P76189</accession>
<reference key="1">
    <citation type="journal article" date="2002" name="Proc. Natl. Acad. Sci. U.S.A.">
        <title>Extensive mosaic structure revealed by the complete genome sequence of uropathogenic Escherichia coli.</title>
        <authorList>
            <person name="Welch R.A."/>
            <person name="Burland V."/>
            <person name="Plunkett G. III"/>
            <person name="Redford P."/>
            <person name="Roesch P."/>
            <person name="Rasko D."/>
            <person name="Buckles E.L."/>
            <person name="Liou S.-R."/>
            <person name="Boutin A."/>
            <person name="Hackett J."/>
            <person name="Stroud D."/>
            <person name="Mayhew G.F."/>
            <person name="Rose D.J."/>
            <person name="Zhou S."/>
            <person name="Schwartz D.C."/>
            <person name="Perna N.T."/>
            <person name="Mobley H.L.T."/>
            <person name="Donnenberg M.S."/>
            <person name="Blattner F.R."/>
        </authorList>
    </citation>
    <scope>NUCLEOTIDE SEQUENCE [LARGE SCALE GENOMIC DNA]</scope>
    <source>
        <strain>CFT073 / ATCC 700928 / UPEC</strain>
    </source>
</reference>
<sequence>MNKHTEHDTREHLLATGEQLCLQRGFTGMGLSELLKTAEVPKGSFYHYFRSKEAFGVAMLERHYAAYHQRLTELLQSGEGNYRDRILAYYQQTLNQFCQHGTISGCLTVKLSAEVCDLSEDMRSAMDKGARGVIALLSQALENGRENHCLTFCGEPLQQAQVLYALWLGANLQAKISRSFEPLENALAHVKNIIATPAV</sequence>
<dbReference type="EMBL" id="AE014075">
    <property type="protein sequence ID" value="AAN80502.1"/>
    <property type="molecule type" value="Genomic_DNA"/>
</dbReference>
<dbReference type="RefSeq" id="WP_001032936.1">
    <property type="nucleotide sequence ID" value="NZ_CP051263.1"/>
</dbReference>
<dbReference type="SMR" id="P67431"/>
<dbReference type="STRING" id="199310.c2042"/>
<dbReference type="GeneID" id="75204494"/>
<dbReference type="KEGG" id="ecc:c2042"/>
<dbReference type="eggNOG" id="COG1309">
    <property type="taxonomic scope" value="Bacteria"/>
</dbReference>
<dbReference type="HOGENOM" id="CLU_069356_28_1_6"/>
<dbReference type="BioCyc" id="ECOL199310:C2042-MONOMER"/>
<dbReference type="Proteomes" id="UP000001410">
    <property type="component" value="Chromosome"/>
</dbReference>
<dbReference type="GO" id="GO:0003677">
    <property type="term" value="F:DNA binding"/>
    <property type="evidence" value="ECO:0007669"/>
    <property type="project" value="UniProtKB-KW"/>
</dbReference>
<dbReference type="FunFam" id="1.10.357.10:FF:000011">
    <property type="entry name" value="Transcriptional regulator, TetR family"/>
    <property type="match status" value="1"/>
</dbReference>
<dbReference type="Gene3D" id="1.10.357.10">
    <property type="entry name" value="Tetracycline Repressor, domain 2"/>
    <property type="match status" value="1"/>
</dbReference>
<dbReference type="InterPro" id="IPR009057">
    <property type="entry name" value="Homeodomain-like_sf"/>
</dbReference>
<dbReference type="InterPro" id="IPR001647">
    <property type="entry name" value="HTH_TetR"/>
</dbReference>
<dbReference type="InterPro" id="IPR036271">
    <property type="entry name" value="Tet_transcr_reg_TetR-rel_C_sf"/>
</dbReference>
<dbReference type="InterPro" id="IPR011075">
    <property type="entry name" value="TetR_C"/>
</dbReference>
<dbReference type="PANTHER" id="PTHR47506:SF6">
    <property type="entry name" value="HTH-TYPE TRANSCRIPTIONAL REPRESSOR NEMR"/>
    <property type="match status" value="1"/>
</dbReference>
<dbReference type="PANTHER" id="PTHR47506">
    <property type="entry name" value="TRANSCRIPTIONAL REGULATORY PROTEIN"/>
    <property type="match status" value="1"/>
</dbReference>
<dbReference type="Pfam" id="PF16925">
    <property type="entry name" value="TetR_C_13"/>
    <property type="match status" value="1"/>
</dbReference>
<dbReference type="Pfam" id="PF00440">
    <property type="entry name" value="TetR_N"/>
    <property type="match status" value="1"/>
</dbReference>
<dbReference type="SUPFAM" id="SSF46689">
    <property type="entry name" value="Homeodomain-like"/>
    <property type="match status" value="1"/>
</dbReference>
<dbReference type="SUPFAM" id="SSF48498">
    <property type="entry name" value="Tetracyclin repressor-like, C-terminal domain"/>
    <property type="match status" value="1"/>
</dbReference>
<dbReference type="PROSITE" id="PS50977">
    <property type="entry name" value="HTH_TETR_2"/>
    <property type="match status" value="1"/>
</dbReference>
<name>NEMR_ECOL6</name>
<organism>
    <name type="scientific">Escherichia coli O6:H1 (strain CFT073 / ATCC 700928 / UPEC)</name>
    <dbReference type="NCBI Taxonomy" id="199310"/>
    <lineage>
        <taxon>Bacteria</taxon>
        <taxon>Pseudomonadati</taxon>
        <taxon>Pseudomonadota</taxon>
        <taxon>Gammaproteobacteria</taxon>
        <taxon>Enterobacterales</taxon>
        <taxon>Enterobacteriaceae</taxon>
        <taxon>Escherichia</taxon>
    </lineage>
</organism>
<gene>
    <name type="primary">nemR</name>
    <name type="ordered locus">c2042</name>
</gene>
<protein>
    <recommendedName>
        <fullName evidence="1">HTH-type transcriptional repressor NemR</fullName>
    </recommendedName>
</protein>
<comment type="function">
    <text evidence="1">Involved in response to both electrophiles and reactive chlorine species (RCS). Represses the transcription of the nemRA-gloA operon by binding to the NemR box.</text>
</comment>
<comment type="induction">
    <text evidence="1">Autoregulated.</text>
</comment>
<feature type="chain" id="PRO_0000070640" description="HTH-type transcriptional repressor NemR">
    <location>
        <begin position="1"/>
        <end position="199"/>
    </location>
</feature>
<feature type="domain" description="HTH tetR-type" evidence="2">
    <location>
        <begin position="7"/>
        <end position="67"/>
    </location>
</feature>
<feature type="DNA-binding region" description="H-T-H motif" evidence="2">
    <location>
        <begin position="30"/>
        <end position="49"/>
    </location>
</feature>
<keyword id="KW-0238">DNA-binding</keyword>
<keyword id="KW-1185">Reference proteome</keyword>
<keyword id="KW-0678">Repressor</keyword>
<keyword id="KW-0346">Stress response</keyword>
<keyword id="KW-0804">Transcription</keyword>
<keyword id="KW-0805">Transcription regulation</keyword>
<proteinExistence type="inferred from homology"/>
<evidence type="ECO:0000250" key="1">
    <source>
        <dbReference type="UniProtKB" id="P67430"/>
    </source>
</evidence>
<evidence type="ECO:0000255" key="2">
    <source>
        <dbReference type="PROSITE-ProRule" id="PRU00335"/>
    </source>
</evidence>